<dbReference type="EC" id="2.4.1.-"/>
<dbReference type="EMBL" id="LT708304">
    <property type="protein sequence ID" value="SIU01603.1"/>
    <property type="status" value="ALT_INIT"/>
    <property type="molecule type" value="Genomic_DNA"/>
</dbReference>
<dbReference type="RefSeq" id="NP_856626.1">
    <property type="nucleotide sequence ID" value="NC_002945.3"/>
</dbReference>
<dbReference type="SMR" id="P0A5A0"/>
<dbReference type="KEGG" id="mbo:BQ2027_MB2981"/>
<dbReference type="PATRIC" id="fig|233413.5.peg.3275"/>
<dbReference type="Proteomes" id="UP000001419">
    <property type="component" value="Chromosome"/>
</dbReference>
<dbReference type="GO" id="GO:0016758">
    <property type="term" value="F:hexosyltransferase activity"/>
    <property type="evidence" value="ECO:0007669"/>
    <property type="project" value="UniProtKB-ARBA"/>
</dbReference>
<dbReference type="GO" id="GO:0009058">
    <property type="term" value="P:biosynthetic process"/>
    <property type="evidence" value="ECO:0007669"/>
    <property type="project" value="UniProtKB-ARBA"/>
</dbReference>
<dbReference type="CDD" id="cd06433">
    <property type="entry name" value="GT_2_WfgS_like"/>
    <property type="match status" value="1"/>
</dbReference>
<dbReference type="Gene3D" id="3.90.550.10">
    <property type="entry name" value="Spore Coat Polysaccharide Biosynthesis Protein SpsA, Chain A"/>
    <property type="match status" value="1"/>
</dbReference>
<dbReference type="InterPro" id="IPR001173">
    <property type="entry name" value="Glyco_trans_2-like"/>
</dbReference>
<dbReference type="InterPro" id="IPR029044">
    <property type="entry name" value="Nucleotide-diphossugar_trans"/>
</dbReference>
<dbReference type="PANTHER" id="PTHR22916">
    <property type="entry name" value="GLYCOSYLTRANSFERASE"/>
    <property type="match status" value="1"/>
</dbReference>
<dbReference type="PANTHER" id="PTHR22916:SF3">
    <property type="entry name" value="UDP-GLCNAC:BETAGAL BETA-1,3-N-ACETYLGLUCOSAMINYLTRANSFERASE-LIKE PROTEIN 1"/>
    <property type="match status" value="1"/>
</dbReference>
<dbReference type="Pfam" id="PF00535">
    <property type="entry name" value="Glycos_transf_2"/>
    <property type="match status" value="1"/>
</dbReference>
<dbReference type="SUPFAM" id="SSF53448">
    <property type="entry name" value="Nucleotide-diphospho-sugar transferases"/>
    <property type="match status" value="1"/>
</dbReference>
<feature type="chain" id="PRO_0000059250" description="PGL/p-HBAD biosynthesis glycosyltransferase Mb2981">
    <location>
        <begin position="1"/>
        <end position="256"/>
    </location>
</feature>
<protein>
    <recommendedName>
        <fullName>PGL/p-HBAD biosynthesis glycosyltransferase Mb2981</fullName>
        <ecNumber>2.4.1.-</ecNumber>
    </recommendedName>
</protein>
<reference key="1">
    <citation type="journal article" date="2003" name="Proc. Natl. Acad. Sci. U.S.A.">
        <title>The complete genome sequence of Mycobacterium bovis.</title>
        <authorList>
            <person name="Garnier T."/>
            <person name="Eiglmeier K."/>
            <person name="Camus J.-C."/>
            <person name="Medina N."/>
            <person name="Mansoor H."/>
            <person name="Pryor M."/>
            <person name="Duthoy S."/>
            <person name="Grondin S."/>
            <person name="Lacroix C."/>
            <person name="Monsempe C."/>
            <person name="Simon S."/>
            <person name="Harris B."/>
            <person name="Atkin R."/>
            <person name="Doggett J."/>
            <person name="Mayes R."/>
            <person name="Keating L."/>
            <person name="Wheeler P.R."/>
            <person name="Parkhill J."/>
            <person name="Barrell B.G."/>
            <person name="Cole S.T."/>
            <person name="Gordon S.V."/>
            <person name="Hewinson R.G."/>
        </authorList>
    </citation>
    <scope>NUCLEOTIDE SEQUENCE [LARGE SCALE GENOMIC DNA]</scope>
    <source>
        <strain>ATCC BAA-935 / AF2122/97</strain>
    </source>
</reference>
<reference key="2">
    <citation type="journal article" date="2017" name="Genome Announc.">
        <title>Updated reference genome sequence and annotation of Mycobacterium bovis AF2122/97.</title>
        <authorList>
            <person name="Malone K.M."/>
            <person name="Farrell D."/>
            <person name="Stuber T.P."/>
            <person name="Schubert O.T."/>
            <person name="Aebersold R."/>
            <person name="Robbe-Austerman S."/>
            <person name="Gordon S.V."/>
        </authorList>
    </citation>
    <scope>NUCLEOTIDE SEQUENCE [LARGE SCALE GENOMIC DNA]</scope>
    <scope>GENOME REANNOTATION</scope>
    <source>
        <strain>ATCC BAA-935 / AF2122/97</strain>
    </source>
</reference>
<evidence type="ECO:0000250" key="1"/>
<evidence type="ECO:0000305" key="2"/>
<organism>
    <name type="scientific">Mycobacterium bovis (strain ATCC BAA-935 / AF2122/97)</name>
    <dbReference type="NCBI Taxonomy" id="233413"/>
    <lineage>
        <taxon>Bacteria</taxon>
        <taxon>Bacillati</taxon>
        <taxon>Actinomycetota</taxon>
        <taxon>Actinomycetes</taxon>
        <taxon>Mycobacteriales</taxon>
        <taxon>Mycobacteriaceae</taxon>
        <taxon>Mycobacterium</taxon>
        <taxon>Mycobacterium tuberculosis complex</taxon>
    </lineage>
</organism>
<proteinExistence type="inferred from homology"/>
<comment type="function">
    <text evidence="1">Involved in glycosylation steps downstream of mono-O-methyl-glycosyl-p-hydroxybenzoic acid derivative (p-HBAD I) and 2-O-methyl-rhamnosyl-phenolphthiocerol dimycocerosate (mycoside B) during the p-hydroxybenzoic acid derivatives (p-HBAD) and glycosylated phenolphthiocerol dimycocerosates (PGL) biosynthesis.</text>
</comment>
<comment type="similarity">
    <text evidence="2">Belongs to the glycosyltransferase 2 family.</text>
</comment>
<comment type="sequence caution" evidence="2">
    <conflict type="erroneous initiation">
        <sequence resource="EMBL-CDS" id="SIU01603"/>
    </conflict>
    <text>Extended N-terminus.</text>
</comment>
<gene>
    <name type="ordered locus">BQ2027_MB2981</name>
</gene>
<name>GLTR1_MYCBO</name>
<keyword id="KW-0328">Glycosyltransferase</keyword>
<keyword id="KW-1185">Reference proteome</keyword>
<keyword id="KW-0808">Transferase</keyword>
<accession>P0A5A0</accession>
<accession>A0A1R3Y2Q6</accession>
<accession>Q50459</accession>
<accession>X2BMC2</accession>
<sequence>MAAPMFSIIIPTLNVAAVLPACLDSIARQTCGDFELVLVDGGSTDETLDIANIFAPNLGERLIIHRDTDQGVYDAMNRGVDLATGTWLLFLGADDSLYEADTLARVAAFIGEHEPSDLVYGDVIMRSTNFRWGGAFDLDRLLFKRNICHQAIFYRRGLFGTIGPYNLRYRVLADWDFNIRCFSNPALVTRYMHVVVASYNEFGGLSNTIVDKEFLKRLPMSTRLGIRLVIVLVRRWPKVISRAMVMRTVISWRRRR</sequence>